<comment type="subcellular location">
    <subcellularLocation>
        <location evidence="4">Secreted</location>
    </subcellularLocation>
    <subcellularLocation>
        <location evidence="4">Nematocyst</location>
    </subcellularLocation>
</comment>
<comment type="mass spectrometry"/>
<comment type="similarity">
    <text evidence="4">Belongs to the sea anemone type 3 (BDS) potassium channel toxin family.</text>
</comment>
<reference key="1">
    <citation type="journal article" date="2008" name="Comp. Biochem. Physiol.">
        <title>Proteomics of the neurotoxic fraction from the sea anemone Bunodosoma cangicum venom: novel peptides belonging to new classes of toxins.</title>
        <authorList>
            <person name="Zaharenko A.J."/>
            <person name="Ferreira W.A. Jr."/>
            <person name="Oliveira J.S."/>
            <person name="Richardson M."/>
            <person name="Pimenta D.C."/>
            <person name="Konno K."/>
            <person name="Portaro F.C."/>
            <person name="de Freitas J.C."/>
        </authorList>
    </citation>
    <scope>PROTEIN SEQUENCE</scope>
    <scope>MASS SPECTROMETRY</scope>
</reference>
<protein>
    <recommendedName>
        <fullName evidence="3">Toxin Bcg III 25.52</fullName>
        <shortName evidence="3">Toxin Bcg 25.52</shortName>
    </recommendedName>
</protein>
<feature type="chain" id="PRO_0000392956" description="Toxin Bcg III 25.52">
    <location>
        <begin position="1"/>
        <end position="33" status="greater than"/>
    </location>
</feature>
<feature type="disulfide bond" evidence="1">
    <location>
        <begin position="4"/>
        <end status="unknown"/>
    </location>
</feature>
<feature type="disulfide bond" evidence="1">
    <location>
        <begin position="6"/>
        <end position="28"/>
    </location>
</feature>
<feature type="disulfide bond" evidence="1">
    <location>
        <begin position="19"/>
        <end status="unknown"/>
    </location>
</feature>
<feature type="non-terminal residue">
    <location>
        <position position="33"/>
    </location>
</feature>
<keyword id="KW-0903">Direct protein sequencing</keyword>
<keyword id="KW-1015">Disulfide bond</keyword>
<keyword id="KW-0872">Ion channel impairing toxin</keyword>
<keyword id="KW-0166">Nematocyst</keyword>
<keyword id="KW-0964">Secreted</keyword>
<keyword id="KW-0800">Toxin</keyword>
<organism>
    <name type="scientific">Bunodosoma cangicum</name>
    <name type="common">Sea anemone</name>
    <dbReference type="NCBI Taxonomy" id="138296"/>
    <lineage>
        <taxon>Eukaryota</taxon>
        <taxon>Metazoa</taxon>
        <taxon>Cnidaria</taxon>
        <taxon>Anthozoa</taxon>
        <taxon>Hexacorallia</taxon>
        <taxon>Actiniaria</taxon>
        <taxon>Actiniidae</taxon>
        <taxon>Bunodosoma</taxon>
    </lineage>
</organism>
<sequence>GVPCSCRGKSGTYWSAGKCPGEHYTTYCNNLIG</sequence>
<name>BDS52_BUNCN</name>
<proteinExistence type="evidence at protein level"/>
<evidence type="ECO:0000250" key="1">
    <source>
        <dbReference type="UniProtKB" id="P61541"/>
    </source>
</evidence>
<evidence type="ECO:0000269" key="2">
    <source>
    </source>
</evidence>
<evidence type="ECO:0000303" key="3">
    <source>
    </source>
</evidence>
<evidence type="ECO:0000305" key="4"/>
<accession>P86463</accession>
<dbReference type="SMR" id="P86463"/>
<dbReference type="GO" id="GO:0005576">
    <property type="term" value="C:extracellular region"/>
    <property type="evidence" value="ECO:0007669"/>
    <property type="project" value="UniProtKB-SubCell"/>
</dbReference>
<dbReference type="GO" id="GO:0042151">
    <property type="term" value="C:nematocyst"/>
    <property type="evidence" value="ECO:0007669"/>
    <property type="project" value="UniProtKB-SubCell"/>
</dbReference>
<dbReference type="GO" id="GO:0008200">
    <property type="term" value="F:ion channel inhibitor activity"/>
    <property type="evidence" value="ECO:0007669"/>
    <property type="project" value="InterPro"/>
</dbReference>
<dbReference type="GO" id="GO:0090729">
    <property type="term" value="F:toxin activity"/>
    <property type="evidence" value="ECO:0007669"/>
    <property type="project" value="UniProtKB-KW"/>
</dbReference>
<dbReference type="Gene3D" id="2.20.20.10">
    <property type="entry name" value="Anthopleurin-A"/>
    <property type="match status" value="1"/>
</dbReference>
<dbReference type="InterPro" id="IPR012414">
    <property type="entry name" value="BDS_K_chnl_tox"/>
</dbReference>
<dbReference type="InterPro" id="IPR023355">
    <property type="entry name" value="Myo_ane_neurotoxin_sf"/>
</dbReference>
<dbReference type="Pfam" id="PF07936">
    <property type="entry name" value="Defensin_4"/>
    <property type="match status" value="1"/>
</dbReference>